<keyword id="KW-0560">Oxidoreductase</keyword>
<keyword id="KW-0819">tRNA processing</keyword>
<dbReference type="EC" id="1.14.-.-" evidence="1"/>
<dbReference type="EMBL" id="CP000485">
    <property type="protein sequence ID" value="ABK84985.1"/>
    <property type="molecule type" value="Genomic_DNA"/>
</dbReference>
<dbReference type="RefSeq" id="WP_000246212.1">
    <property type="nucleotide sequence ID" value="NC_008600.1"/>
</dbReference>
<dbReference type="SMR" id="A0RCP2"/>
<dbReference type="KEGG" id="btl:BALH_1658"/>
<dbReference type="HOGENOM" id="CLU_038878_1_0_9"/>
<dbReference type="GO" id="GO:0016705">
    <property type="term" value="F:oxidoreductase activity, acting on paired donors, with incorporation or reduction of molecular oxygen"/>
    <property type="evidence" value="ECO:0007669"/>
    <property type="project" value="UniProtKB-UniRule"/>
</dbReference>
<dbReference type="GO" id="GO:0006400">
    <property type="term" value="P:tRNA modification"/>
    <property type="evidence" value="ECO:0007669"/>
    <property type="project" value="UniProtKB-UniRule"/>
</dbReference>
<dbReference type="CDD" id="cd01518">
    <property type="entry name" value="RHOD_YceA"/>
    <property type="match status" value="1"/>
</dbReference>
<dbReference type="Gene3D" id="3.30.70.100">
    <property type="match status" value="1"/>
</dbReference>
<dbReference type="Gene3D" id="3.40.250.10">
    <property type="entry name" value="Rhodanese-like domain"/>
    <property type="match status" value="1"/>
</dbReference>
<dbReference type="HAMAP" id="MF_00469">
    <property type="entry name" value="TrhO"/>
    <property type="match status" value="1"/>
</dbReference>
<dbReference type="InterPro" id="IPR001763">
    <property type="entry name" value="Rhodanese-like_dom"/>
</dbReference>
<dbReference type="InterPro" id="IPR036873">
    <property type="entry name" value="Rhodanese-like_dom_sf"/>
</dbReference>
<dbReference type="InterPro" id="IPR022111">
    <property type="entry name" value="Rhodanese_C"/>
</dbReference>
<dbReference type="InterPro" id="IPR020936">
    <property type="entry name" value="TrhO"/>
</dbReference>
<dbReference type="InterPro" id="IPR040503">
    <property type="entry name" value="TRHO_N"/>
</dbReference>
<dbReference type="NCBIfam" id="NF001135">
    <property type="entry name" value="PRK00142.1-3"/>
    <property type="match status" value="1"/>
</dbReference>
<dbReference type="PANTHER" id="PTHR43268:SF3">
    <property type="entry name" value="RHODANESE-LIKE DOMAIN-CONTAINING PROTEIN 7-RELATED"/>
    <property type="match status" value="1"/>
</dbReference>
<dbReference type="PANTHER" id="PTHR43268">
    <property type="entry name" value="THIOSULFATE SULFURTRANSFERASE/RHODANESE-LIKE DOMAIN-CONTAINING PROTEIN 2"/>
    <property type="match status" value="1"/>
</dbReference>
<dbReference type="Pfam" id="PF00581">
    <property type="entry name" value="Rhodanese"/>
    <property type="match status" value="1"/>
</dbReference>
<dbReference type="Pfam" id="PF12368">
    <property type="entry name" value="Rhodanese_C"/>
    <property type="match status" value="1"/>
</dbReference>
<dbReference type="Pfam" id="PF17773">
    <property type="entry name" value="UPF0176_N"/>
    <property type="match status" value="1"/>
</dbReference>
<dbReference type="SMART" id="SM00450">
    <property type="entry name" value="RHOD"/>
    <property type="match status" value="1"/>
</dbReference>
<dbReference type="SUPFAM" id="SSF52821">
    <property type="entry name" value="Rhodanese/Cell cycle control phosphatase"/>
    <property type="match status" value="1"/>
</dbReference>
<dbReference type="PROSITE" id="PS50206">
    <property type="entry name" value="RHODANESE_3"/>
    <property type="match status" value="1"/>
</dbReference>
<proteinExistence type="inferred from homology"/>
<sequence length="319" mass="36702">MATTKPYRVLLYYMYTTIENPEEFAAEHLAFCNSLELKGRILVAKEGINGTCSGTVEQTEKYMEAMNNDPRFDGIVFKIDEADGHAFKKMHVRPRPELVTLRLEDDINPHEITGKYLEPKDFYEAMKQEDTVIIDARNDYEFDLGHFKGAIKPDIESFRELPDWIRENKEVLEGKKILTYCTGGIRCEKFSGWLVREGYEDVSQLHGGIVTYGKDPEVQGELWDGQCYVFDERIAVPVNQKEHVIVGKDHFTGEPCERYVNCANPECNKKILCSEENEAKYLRACSHECRVSPRNRYVIQHELTEEQVAAALEKIEAGK</sequence>
<reference key="1">
    <citation type="journal article" date="2007" name="J. Bacteriol.">
        <title>The complete genome sequence of Bacillus thuringiensis Al Hakam.</title>
        <authorList>
            <person name="Challacombe J.F."/>
            <person name="Altherr M.R."/>
            <person name="Xie G."/>
            <person name="Bhotika S.S."/>
            <person name="Brown N."/>
            <person name="Bruce D."/>
            <person name="Campbell C.S."/>
            <person name="Campbell M.L."/>
            <person name="Chen J."/>
            <person name="Chertkov O."/>
            <person name="Cleland C."/>
            <person name="Dimitrijevic M."/>
            <person name="Doggett N.A."/>
            <person name="Fawcett J.J."/>
            <person name="Glavina T."/>
            <person name="Goodwin L.A."/>
            <person name="Green L.D."/>
            <person name="Han C.S."/>
            <person name="Hill K.K."/>
            <person name="Hitchcock P."/>
            <person name="Jackson P.J."/>
            <person name="Keim P."/>
            <person name="Kewalramani A.R."/>
            <person name="Longmire J."/>
            <person name="Lucas S."/>
            <person name="Malfatti S."/>
            <person name="Martinez D."/>
            <person name="McMurry K."/>
            <person name="Meincke L.J."/>
            <person name="Misra M."/>
            <person name="Moseman B.L."/>
            <person name="Mundt M."/>
            <person name="Munk A.C."/>
            <person name="Okinaka R.T."/>
            <person name="Parson-Quintana B."/>
            <person name="Reilly L.P."/>
            <person name="Richardson P."/>
            <person name="Robinson D.L."/>
            <person name="Saunders E."/>
            <person name="Tapia R."/>
            <person name="Tesmer J.G."/>
            <person name="Thayer N."/>
            <person name="Thompson L.S."/>
            <person name="Tice H."/>
            <person name="Ticknor L.O."/>
            <person name="Wills P.L."/>
            <person name="Gilna P."/>
            <person name="Brettin T.S."/>
        </authorList>
    </citation>
    <scope>NUCLEOTIDE SEQUENCE [LARGE SCALE GENOMIC DNA]</scope>
    <source>
        <strain>Al Hakam</strain>
    </source>
</reference>
<organism>
    <name type="scientific">Bacillus thuringiensis (strain Al Hakam)</name>
    <dbReference type="NCBI Taxonomy" id="412694"/>
    <lineage>
        <taxon>Bacteria</taxon>
        <taxon>Bacillati</taxon>
        <taxon>Bacillota</taxon>
        <taxon>Bacilli</taxon>
        <taxon>Bacillales</taxon>
        <taxon>Bacillaceae</taxon>
        <taxon>Bacillus</taxon>
        <taxon>Bacillus cereus group</taxon>
    </lineage>
</organism>
<evidence type="ECO:0000255" key="1">
    <source>
        <dbReference type="HAMAP-Rule" id="MF_00469"/>
    </source>
</evidence>
<protein>
    <recommendedName>
        <fullName evidence="1">tRNA uridine(34) hydroxylase</fullName>
        <ecNumber evidence="1">1.14.-.-</ecNumber>
    </recommendedName>
    <alternativeName>
        <fullName evidence="1">tRNA hydroxylation protein O</fullName>
    </alternativeName>
</protein>
<gene>
    <name evidence="1" type="primary">trhO</name>
    <name type="ordered locus">BALH_1658</name>
</gene>
<name>TRHO_BACAH</name>
<accession>A0RCP2</accession>
<comment type="function">
    <text evidence="1">Catalyzes oxygen-dependent 5-hydroxyuridine (ho5U) modification at position 34 in tRNAs.</text>
</comment>
<comment type="catalytic activity">
    <reaction evidence="1">
        <text>uridine(34) in tRNA + AH2 + O2 = 5-hydroxyuridine(34) in tRNA + A + H2O</text>
        <dbReference type="Rhea" id="RHEA:64224"/>
        <dbReference type="Rhea" id="RHEA-COMP:11727"/>
        <dbReference type="Rhea" id="RHEA-COMP:13381"/>
        <dbReference type="ChEBI" id="CHEBI:13193"/>
        <dbReference type="ChEBI" id="CHEBI:15377"/>
        <dbReference type="ChEBI" id="CHEBI:15379"/>
        <dbReference type="ChEBI" id="CHEBI:17499"/>
        <dbReference type="ChEBI" id="CHEBI:65315"/>
        <dbReference type="ChEBI" id="CHEBI:136877"/>
    </reaction>
</comment>
<comment type="similarity">
    <text evidence="1">Belongs to the TrhO family.</text>
</comment>
<feature type="chain" id="PRO_1000013722" description="tRNA uridine(34) hydroxylase">
    <location>
        <begin position="1"/>
        <end position="319"/>
    </location>
</feature>
<feature type="domain" description="Rhodanese" evidence="1">
    <location>
        <begin position="127"/>
        <end position="221"/>
    </location>
</feature>
<feature type="active site" description="Cysteine persulfide intermediate" evidence="1">
    <location>
        <position position="181"/>
    </location>
</feature>